<name>ATPF_GNEPA</name>
<dbReference type="EMBL" id="AB295907">
    <property type="protein sequence ID" value="BAF64856.1"/>
    <property type="molecule type" value="Genomic_DNA"/>
</dbReference>
<dbReference type="EMBL" id="AP009569">
    <property type="protein sequence ID" value="BAH11292.1"/>
    <property type="molecule type" value="Genomic_DNA"/>
</dbReference>
<dbReference type="RefSeq" id="YP_002519781.1">
    <property type="nucleotide sequence ID" value="NC_011942.1"/>
</dbReference>
<dbReference type="SMR" id="A6BM11"/>
<dbReference type="GeneID" id="7368117"/>
<dbReference type="GO" id="GO:0009535">
    <property type="term" value="C:chloroplast thylakoid membrane"/>
    <property type="evidence" value="ECO:0007669"/>
    <property type="project" value="UniProtKB-SubCell"/>
</dbReference>
<dbReference type="GO" id="GO:0045259">
    <property type="term" value="C:proton-transporting ATP synthase complex"/>
    <property type="evidence" value="ECO:0007669"/>
    <property type="project" value="UniProtKB-KW"/>
</dbReference>
<dbReference type="GO" id="GO:0046933">
    <property type="term" value="F:proton-transporting ATP synthase activity, rotational mechanism"/>
    <property type="evidence" value="ECO:0007669"/>
    <property type="project" value="UniProtKB-UniRule"/>
</dbReference>
<dbReference type="CDD" id="cd06503">
    <property type="entry name" value="ATP-synt_Fo_b"/>
    <property type="match status" value="1"/>
</dbReference>
<dbReference type="HAMAP" id="MF_01398">
    <property type="entry name" value="ATP_synth_b_bprime"/>
    <property type="match status" value="1"/>
</dbReference>
<dbReference type="InterPro" id="IPR002146">
    <property type="entry name" value="ATP_synth_b/b'su_bac/chlpt"/>
</dbReference>
<dbReference type="PANTHER" id="PTHR34264">
    <property type="entry name" value="ATP SYNTHASE SUBUNIT B, CHLOROPLASTIC"/>
    <property type="match status" value="1"/>
</dbReference>
<dbReference type="PANTHER" id="PTHR34264:SF3">
    <property type="entry name" value="ATP SYNTHASE SUBUNIT B, CHLOROPLASTIC"/>
    <property type="match status" value="1"/>
</dbReference>
<dbReference type="Pfam" id="PF00430">
    <property type="entry name" value="ATP-synt_B"/>
    <property type="match status" value="1"/>
</dbReference>
<comment type="function">
    <text evidence="1">F(1)F(0) ATP synthase produces ATP from ADP in the presence of a proton or sodium gradient. F-type ATPases consist of two structural domains, F(1) containing the extramembraneous catalytic core and F(0) containing the membrane proton channel, linked together by a central stalk and a peripheral stalk. During catalysis, ATP synthesis in the catalytic domain of F(1) is coupled via a rotary mechanism of the central stalk subunits to proton translocation.</text>
</comment>
<comment type="function">
    <text evidence="1">Component of the F(0) channel, it forms part of the peripheral stalk, linking F(1) to F(0).</text>
</comment>
<comment type="subunit">
    <text evidence="1">F-type ATPases have 2 components, F(1) - the catalytic core - and F(0) - the membrane proton channel. F(1) has five subunits: alpha(3), beta(3), gamma(1), delta(1), epsilon(1). F(0) has four main subunits: a(1), b(1), b'(1) and c(10-14). The alpha and beta chains form an alternating ring which encloses part of the gamma chain. F(1) is attached to F(0) by a central stalk formed by the gamma and epsilon chains, while a peripheral stalk is formed by the delta, b and b' chains.</text>
</comment>
<comment type="subcellular location">
    <subcellularLocation>
        <location evidence="1">Plastid</location>
        <location evidence="1">Chloroplast thylakoid membrane</location>
        <topology evidence="1">Single-pass membrane protein</topology>
    </subcellularLocation>
</comment>
<comment type="miscellaneous">
    <text>In plastids the F-type ATPase is also known as CF(1)CF(0).</text>
</comment>
<comment type="similarity">
    <text evidence="1">Belongs to the ATPase B chain family.</text>
</comment>
<protein>
    <recommendedName>
        <fullName evidence="1">ATP synthase subunit b, chloroplastic</fullName>
    </recommendedName>
    <alternativeName>
        <fullName evidence="1">ATP synthase F(0) sector subunit b</fullName>
    </alternativeName>
    <alternativeName>
        <fullName evidence="1">ATPase subunit I</fullName>
    </alternativeName>
</protein>
<feature type="chain" id="PRO_0000368934" description="ATP synthase subunit b, chloroplastic">
    <location>
        <begin position="1"/>
        <end position="185"/>
    </location>
</feature>
<feature type="transmembrane region" description="Helical" evidence="1">
    <location>
        <begin position="31"/>
        <end position="53"/>
    </location>
</feature>
<evidence type="ECO:0000255" key="1">
    <source>
        <dbReference type="HAMAP-Rule" id="MF_01398"/>
    </source>
</evidence>
<proteinExistence type="inferred from homology"/>
<organism>
    <name type="scientific">Gnetum parvifolium</name>
    <name type="common">Small-leaved jointfir</name>
    <name type="synonym">Gnetum scandens var. parvifolium</name>
    <dbReference type="NCBI Taxonomy" id="33153"/>
    <lineage>
        <taxon>Eukaryota</taxon>
        <taxon>Viridiplantae</taxon>
        <taxon>Streptophyta</taxon>
        <taxon>Embryophyta</taxon>
        <taxon>Tracheophyta</taxon>
        <taxon>Spermatophyta</taxon>
        <taxon>Gnetopsida</taxon>
        <taxon>Gnetidae</taxon>
        <taxon>Gnetales</taxon>
        <taxon>Gnetaceae</taxon>
        <taxon>Gnetum</taxon>
    </lineage>
</organism>
<keyword id="KW-0066">ATP synthesis</keyword>
<keyword id="KW-0138">CF(0)</keyword>
<keyword id="KW-0150">Chloroplast</keyword>
<keyword id="KW-0375">Hydrogen ion transport</keyword>
<keyword id="KW-0406">Ion transport</keyword>
<keyword id="KW-0472">Membrane</keyword>
<keyword id="KW-0934">Plastid</keyword>
<keyword id="KW-0793">Thylakoid</keyword>
<keyword id="KW-0812">Transmembrane</keyword>
<keyword id="KW-1133">Transmembrane helix</keyword>
<keyword id="KW-0813">Transport</keyword>
<accession>A6BM11</accession>
<reference key="1">
    <citation type="journal article" date="2007" name="Mol. Biol. Evol.">
        <title>Chloroplast genome (cpDNA) of Cycas taitungensis and 56 cp protein-coding genes of Gnetum parvifolium: insights into cpDNA evolution and phylogeny of extant seed plants.</title>
        <authorList>
            <person name="Wu C.-S."/>
            <person name="Wang Y.-N."/>
            <person name="Liu S.-M."/>
            <person name="Chaw S.-M."/>
        </authorList>
    </citation>
    <scope>NUCLEOTIDE SEQUENCE [LARGE SCALE GENOMIC DNA]</scope>
</reference>
<reference key="2">
    <citation type="journal article" date="2009" name="Mol. Phylogenet. Evol.">
        <title>Evolution of reduced and compact chloroplast genomes (cpDNAs) in gnetophytes: Selection toward a lower-cost strategy.</title>
        <authorList>
            <person name="Wu C.-S."/>
            <person name="Lai Y.-T."/>
            <person name="Lin C.-P."/>
            <person name="Wang Y.-N."/>
            <person name="Chaw S.-M."/>
        </authorList>
    </citation>
    <scope>NUCLEOTIDE SEQUENCE [LARGE SCALE GENOMIC DNA]</scope>
</reference>
<geneLocation type="chloroplast"/>
<gene>
    <name evidence="1" type="primary">atpF</name>
</gene>
<sequence>MKGIANSLIYLSYWPSAGSFGFNTNILETNIINITVVLGILIYFGKGVLSNLLDNRKSKIYSTIQNSEELCKGARHQLEKARARLQEIEMRVDEIRANGYLQIEQEKEDLVQAASVNLKQLEDSKNETVSFEQQKVIDQVRQQVSYQALQKALTFMKNCLNTELHLRMINYNIGRLRAKRTGQFL</sequence>